<keyword id="KW-0066">ATP synthesis</keyword>
<keyword id="KW-0067">ATP-binding</keyword>
<keyword id="KW-0139">CF(1)</keyword>
<keyword id="KW-0150">Chloroplast</keyword>
<keyword id="KW-0903">Direct protein sequencing</keyword>
<keyword id="KW-0375">Hydrogen ion transport</keyword>
<keyword id="KW-0406">Ion transport</keyword>
<keyword id="KW-0472">Membrane</keyword>
<keyword id="KW-0547">Nucleotide-binding</keyword>
<keyword id="KW-0934">Plastid</keyword>
<keyword id="KW-1185">Reference proteome</keyword>
<keyword id="KW-0793">Thylakoid</keyword>
<keyword id="KW-1278">Translocase</keyword>
<keyword id="KW-0813">Transport</keyword>
<organism>
    <name type="scientific">Physcomitrium patens</name>
    <name type="common">Spreading-leaved earth moss</name>
    <name type="synonym">Physcomitrella patens</name>
    <dbReference type="NCBI Taxonomy" id="3218"/>
    <lineage>
        <taxon>Eukaryota</taxon>
        <taxon>Viridiplantae</taxon>
        <taxon>Streptophyta</taxon>
        <taxon>Embryophyta</taxon>
        <taxon>Bryophyta</taxon>
        <taxon>Bryophytina</taxon>
        <taxon>Bryopsida</taxon>
        <taxon>Funariidae</taxon>
        <taxon>Funariales</taxon>
        <taxon>Funariaceae</taxon>
        <taxon>Physcomitrium</taxon>
    </lineage>
</organism>
<evidence type="ECO:0000255" key="1">
    <source>
        <dbReference type="HAMAP-Rule" id="MF_01347"/>
    </source>
</evidence>
<evidence type="ECO:0000305" key="2"/>
<accession>P80658</accession>
<sequence>MKNDSRTFGASTVLTKTQNIGRISQIIGPVLDVTFPPGKMPNIYNSLIVKGQNTAGQEINVTCEVQQLLGNNKVRAVAMSATDGLMRGMDVVDTGAALSVPVGEATLGRIFNVLGEPVDNLGPVDASTTFPIHRSAPAFTQLDTKLSIFETGIKVVDLLAPYRRGGKIGLFGGAGVGKTVLIMELINNIAKAHGGVSVFGGVGERTREGNDLYMEMKESKVINEENISESKVALVYGQMNEPPGARMRVGLTALTMAEYFRDVNKQDVLLFIDNIFRFVQAGSEVSALLGRMPSAVGYQPTLSTEMGTLQERITSTKEGSITSIQAVYVPADDLTDPAPATTFAHLDATTVLSRGLAAKGIYPAVDPLDSTSTMLQPWIVGEEHYETAQGVKETLQRYKELQDIIAILGLDELSEEDRLVVARARKIERFLSQPFFVAEVSTGSPGKYVSLAETIKGFQMILSGELDSFPEQAFYLVGNIDEATAKAANLQMEN</sequence>
<gene>
    <name evidence="1" type="primary">atpB</name>
</gene>
<dbReference type="EC" id="7.1.2.2" evidence="1"/>
<dbReference type="EMBL" id="AP005672">
    <property type="protein sequence ID" value="BAC85045.1"/>
    <property type="molecule type" value="Genomic_DNA"/>
</dbReference>
<dbReference type="RefSeq" id="NP_904195.1">
    <property type="nucleotide sequence ID" value="NC_005087.1"/>
</dbReference>
<dbReference type="SMR" id="P80658"/>
<dbReference type="FunCoup" id="P80658">
    <property type="interactions" value="559"/>
</dbReference>
<dbReference type="STRING" id="3218.P80658"/>
<dbReference type="GeneID" id="2546734"/>
<dbReference type="KEGG" id="ppp:2546734"/>
<dbReference type="InParanoid" id="P80658"/>
<dbReference type="OrthoDB" id="149879at2759"/>
<dbReference type="Proteomes" id="UP000006727">
    <property type="component" value="Chloroplast"/>
</dbReference>
<dbReference type="GO" id="GO:0009535">
    <property type="term" value="C:chloroplast thylakoid membrane"/>
    <property type="evidence" value="ECO:0007669"/>
    <property type="project" value="UniProtKB-SubCell"/>
</dbReference>
<dbReference type="GO" id="GO:0005739">
    <property type="term" value="C:mitochondrion"/>
    <property type="evidence" value="ECO:0007669"/>
    <property type="project" value="GOC"/>
</dbReference>
<dbReference type="GO" id="GO:0045259">
    <property type="term" value="C:proton-transporting ATP synthase complex"/>
    <property type="evidence" value="ECO:0007669"/>
    <property type="project" value="UniProtKB-KW"/>
</dbReference>
<dbReference type="GO" id="GO:0005524">
    <property type="term" value="F:ATP binding"/>
    <property type="evidence" value="ECO:0007669"/>
    <property type="project" value="UniProtKB-UniRule"/>
</dbReference>
<dbReference type="GO" id="GO:0016887">
    <property type="term" value="F:ATP hydrolysis activity"/>
    <property type="evidence" value="ECO:0007669"/>
    <property type="project" value="InterPro"/>
</dbReference>
<dbReference type="GO" id="GO:0046933">
    <property type="term" value="F:proton-transporting ATP synthase activity, rotational mechanism"/>
    <property type="evidence" value="ECO:0007669"/>
    <property type="project" value="UniProtKB-UniRule"/>
</dbReference>
<dbReference type="GO" id="GO:0042776">
    <property type="term" value="P:proton motive force-driven mitochondrial ATP synthesis"/>
    <property type="evidence" value="ECO:0000318"/>
    <property type="project" value="GO_Central"/>
</dbReference>
<dbReference type="CDD" id="cd18110">
    <property type="entry name" value="ATP-synt_F1_beta_C"/>
    <property type="match status" value="1"/>
</dbReference>
<dbReference type="CDD" id="cd18115">
    <property type="entry name" value="ATP-synt_F1_beta_N"/>
    <property type="match status" value="1"/>
</dbReference>
<dbReference type="CDD" id="cd01133">
    <property type="entry name" value="F1-ATPase_beta_CD"/>
    <property type="match status" value="1"/>
</dbReference>
<dbReference type="FunFam" id="1.10.1140.10:FF:000001">
    <property type="entry name" value="ATP synthase subunit beta"/>
    <property type="match status" value="1"/>
</dbReference>
<dbReference type="FunFam" id="3.40.50.300:FF:000004">
    <property type="entry name" value="ATP synthase subunit beta"/>
    <property type="match status" value="1"/>
</dbReference>
<dbReference type="FunFam" id="2.40.10.170:FF:000002">
    <property type="entry name" value="ATP synthase subunit beta, chloroplastic"/>
    <property type="match status" value="1"/>
</dbReference>
<dbReference type="Gene3D" id="2.40.10.170">
    <property type="match status" value="1"/>
</dbReference>
<dbReference type="Gene3D" id="1.10.1140.10">
    <property type="entry name" value="Bovine Mitochondrial F1-atpase, Atp Synthase Beta Chain, Chain D, domain 3"/>
    <property type="match status" value="1"/>
</dbReference>
<dbReference type="Gene3D" id="3.40.50.300">
    <property type="entry name" value="P-loop containing nucleotide triphosphate hydrolases"/>
    <property type="match status" value="1"/>
</dbReference>
<dbReference type="HAMAP" id="MF_01347">
    <property type="entry name" value="ATP_synth_beta_bact"/>
    <property type="match status" value="1"/>
</dbReference>
<dbReference type="InterPro" id="IPR003593">
    <property type="entry name" value="AAA+_ATPase"/>
</dbReference>
<dbReference type="InterPro" id="IPR055190">
    <property type="entry name" value="ATP-synt_VA_C"/>
</dbReference>
<dbReference type="InterPro" id="IPR005722">
    <property type="entry name" value="ATP_synth_F1_bsu"/>
</dbReference>
<dbReference type="InterPro" id="IPR020003">
    <property type="entry name" value="ATPase_a/bsu_AS"/>
</dbReference>
<dbReference type="InterPro" id="IPR050053">
    <property type="entry name" value="ATPase_alpha/beta_chains"/>
</dbReference>
<dbReference type="InterPro" id="IPR004100">
    <property type="entry name" value="ATPase_F1/V1/A1_a/bsu_N"/>
</dbReference>
<dbReference type="InterPro" id="IPR036121">
    <property type="entry name" value="ATPase_F1/V1/A1_a/bsu_N_sf"/>
</dbReference>
<dbReference type="InterPro" id="IPR000194">
    <property type="entry name" value="ATPase_F1/V1/A1_a/bsu_nucl-bd"/>
</dbReference>
<dbReference type="InterPro" id="IPR024034">
    <property type="entry name" value="ATPase_F1/V1_b/a_C"/>
</dbReference>
<dbReference type="InterPro" id="IPR027417">
    <property type="entry name" value="P-loop_NTPase"/>
</dbReference>
<dbReference type="NCBIfam" id="TIGR01039">
    <property type="entry name" value="atpD"/>
    <property type="match status" value="1"/>
</dbReference>
<dbReference type="PANTHER" id="PTHR15184">
    <property type="entry name" value="ATP SYNTHASE"/>
    <property type="match status" value="1"/>
</dbReference>
<dbReference type="PANTHER" id="PTHR15184:SF71">
    <property type="entry name" value="ATP SYNTHASE SUBUNIT BETA, MITOCHONDRIAL"/>
    <property type="match status" value="1"/>
</dbReference>
<dbReference type="Pfam" id="PF00006">
    <property type="entry name" value="ATP-synt_ab"/>
    <property type="match status" value="1"/>
</dbReference>
<dbReference type="Pfam" id="PF02874">
    <property type="entry name" value="ATP-synt_ab_N"/>
    <property type="match status" value="1"/>
</dbReference>
<dbReference type="Pfam" id="PF22919">
    <property type="entry name" value="ATP-synt_VA_C"/>
    <property type="match status" value="1"/>
</dbReference>
<dbReference type="SMART" id="SM00382">
    <property type="entry name" value="AAA"/>
    <property type="match status" value="1"/>
</dbReference>
<dbReference type="SUPFAM" id="SSF47917">
    <property type="entry name" value="C-terminal domain of alpha and beta subunits of F1 ATP synthase"/>
    <property type="match status" value="1"/>
</dbReference>
<dbReference type="SUPFAM" id="SSF50615">
    <property type="entry name" value="N-terminal domain of alpha and beta subunits of F1 ATP synthase"/>
    <property type="match status" value="1"/>
</dbReference>
<dbReference type="SUPFAM" id="SSF52540">
    <property type="entry name" value="P-loop containing nucleoside triphosphate hydrolases"/>
    <property type="match status" value="1"/>
</dbReference>
<dbReference type="PROSITE" id="PS00152">
    <property type="entry name" value="ATPASE_ALPHA_BETA"/>
    <property type="match status" value="1"/>
</dbReference>
<geneLocation type="chloroplast"/>
<name>ATPB_PHYPA</name>
<proteinExistence type="evidence at protein level"/>
<reference key="1">
    <citation type="journal article" date="2003" name="Nucleic Acids Res.">
        <title>Complete chloroplast DNA sequence of the moss Physcomitrella patens: evidence for the loss and relocation of rpoA from the chloroplast to the nucleus.</title>
        <authorList>
            <person name="Sugiura C."/>
            <person name="Kobayashi Y."/>
            <person name="Setsuyuki A."/>
            <person name="Sugita C."/>
            <person name="Sugita M."/>
        </authorList>
    </citation>
    <scope>NUCLEOTIDE SEQUENCE [LARGE SCALE GENOMIC DNA]</scope>
    <source>
        <strain>cv. Gransden 2004</strain>
    </source>
</reference>
<reference key="2">
    <citation type="journal article" date="1997" name="Planta">
        <title>Cytokinin affects nuclear- and plastome-encoded energy-converting plastid enzymes.</title>
        <authorList>
            <person name="Kasten B."/>
            <person name="Buck F."/>
            <person name="Nuske J."/>
            <person name="Reski R."/>
        </authorList>
    </citation>
    <scope>PROTEIN SEQUENCE OF 16-36</scope>
    <source>
        <tissue>Protonema</tissue>
    </source>
</reference>
<feature type="chain" id="PRO_0000144540" description="ATP synthase subunit beta, chloroplastic">
    <location>
        <begin position="1"/>
        <end position="494"/>
    </location>
</feature>
<feature type="binding site" evidence="1">
    <location>
        <begin position="172"/>
        <end position="179"/>
    </location>
    <ligand>
        <name>ATP</name>
        <dbReference type="ChEBI" id="CHEBI:30616"/>
    </ligand>
</feature>
<feature type="sequence conflict" description="In Ref. 2; AA sequence." evidence="2" ref="2">
    <original>S</original>
    <variation>T</variation>
    <location>
        <position position="24"/>
    </location>
</feature>
<feature type="sequence conflict" description="In Ref. 2; AA sequence." evidence="2" ref="2">
    <original>V</original>
    <variation>I</variation>
    <location>
        <position position="33"/>
    </location>
</feature>
<protein>
    <recommendedName>
        <fullName evidence="1">ATP synthase subunit beta, chloroplastic</fullName>
        <ecNumber evidence="1">7.1.2.2</ecNumber>
    </recommendedName>
    <alternativeName>
        <fullName evidence="1">ATP synthase F1 sector subunit beta</fullName>
    </alternativeName>
    <alternativeName>
        <fullName evidence="1">F-ATPase subunit beta</fullName>
    </alternativeName>
</protein>
<comment type="function">
    <text evidence="1">Produces ATP from ADP in the presence of a proton gradient across the membrane. The catalytic sites are hosted primarily by the beta subunits.</text>
</comment>
<comment type="catalytic activity">
    <reaction evidence="1">
        <text>ATP + H2O + 4 H(+)(in) = ADP + phosphate + 5 H(+)(out)</text>
        <dbReference type="Rhea" id="RHEA:57720"/>
        <dbReference type="ChEBI" id="CHEBI:15377"/>
        <dbReference type="ChEBI" id="CHEBI:15378"/>
        <dbReference type="ChEBI" id="CHEBI:30616"/>
        <dbReference type="ChEBI" id="CHEBI:43474"/>
        <dbReference type="ChEBI" id="CHEBI:456216"/>
        <dbReference type="EC" id="7.1.2.2"/>
    </reaction>
</comment>
<comment type="subunit">
    <text evidence="1">F-type ATPases have 2 components, CF(1) - the catalytic core - and CF(0) - the membrane proton channel. CF(1) has five subunits: alpha(3), beta(3), gamma(1), delta(1), epsilon(1). CF(0) has four main subunits: a(1), b(1), b'(1) and c(9-12).</text>
</comment>
<comment type="subcellular location">
    <subcellularLocation>
        <location evidence="1">Plastid</location>
        <location evidence="1">Chloroplast thylakoid membrane</location>
        <topology evidence="1">Peripheral membrane protein</topology>
    </subcellularLocation>
</comment>
<comment type="similarity">
    <text evidence="1">Belongs to the ATPase alpha/beta chains family.</text>
</comment>